<comment type="function">
    <text evidence="1">Transaldolase is important for the balance of metabolites in the pentose-phosphate pathway.</text>
</comment>
<comment type="catalytic activity">
    <reaction evidence="1">
        <text>D-sedoheptulose 7-phosphate + D-glyceraldehyde 3-phosphate = D-erythrose 4-phosphate + beta-D-fructose 6-phosphate</text>
        <dbReference type="Rhea" id="RHEA:17053"/>
        <dbReference type="ChEBI" id="CHEBI:16897"/>
        <dbReference type="ChEBI" id="CHEBI:57483"/>
        <dbReference type="ChEBI" id="CHEBI:57634"/>
        <dbReference type="ChEBI" id="CHEBI:59776"/>
        <dbReference type="EC" id="2.2.1.2"/>
    </reaction>
</comment>
<comment type="pathway">
    <text evidence="1">Carbohydrate degradation; pentose phosphate pathway; D-glyceraldehyde 3-phosphate and beta-D-fructose 6-phosphate from D-ribose 5-phosphate and D-xylulose 5-phosphate (non-oxidative stage): step 2/3.</text>
</comment>
<comment type="subcellular location">
    <subcellularLocation>
        <location evidence="1">Cytoplasm</location>
    </subcellularLocation>
</comment>
<comment type="similarity">
    <text evidence="1">Belongs to the transaldolase family. Type 3B subfamily.</text>
</comment>
<accession>A4SGX9</accession>
<feature type="chain" id="PRO_1000126346" description="Probable transaldolase">
    <location>
        <begin position="1"/>
        <end position="222"/>
    </location>
</feature>
<feature type="active site" description="Schiff-base intermediate with substrate" evidence="1">
    <location>
        <position position="91"/>
    </location>
</feature>
<protein>
    <recommendedName>
        <fullName evidence="1">Probable transaldolase</fullName>
        <ecNumber evidence="1">2.2.1.2</ecNumber>
    </recommendedName>
</protein>
<keyword id="KW-0963">Cytoplasm</keyword>
<keyword id="KW-0570">Pentose shunt</keyword>
<keyword id="KW-0704">Schiff base</keyword>
<keyword id="KW-0808">Transferase</keyword>
<evidence type="ECO:0000255" key="1">
    <source>
        <dbReference type="HAMAP-Rule" id="MF_00494"/>
    </source>
</evidence>
<name>TAL_CHLPM</name>
<reference key="1">
    <citation type="submission" date="2007-03" db="EMBL/GenBank/DDBJ databases">
        <title>Complete sequence of Prosthecochloris vibrioformis DSM 265.</title>
        <authorList>
            <consortium name="US DOE Joint Genome Institute"/>
            <person name="Copeland A."/>
            <person name="Lucas S."/>
            <person name="Lapidus A."/>
            <person name="Barry K."/>
            <person name="Detter J.C."/>
            <person name="Glavina del Rio T."/>
            <person name="Hammon N."/>
            <person name="Israni S."/>
            <person name="Pitluck S."/>
            <person name="Schmutz J."/>
            <person name="Larimer F."/>
            <person name="Land M."/>
            <person name="Hauser L."/>
            <person name="Mikhailova N."/>
            <person name="Li T."/>
            <person name="Overmann J."/>
            <person name="Schuster S.C."/>
            <person name="Bryant D.A."/>
            <person name="Richardson P."/>
        </authorList>
    </citation>
    <scope>NUCLEOTIDE SEQUENCE [LARGE SCALE GENOMIC DNA]</scope>
    <source>
        <strain>DSM 265 / 1930</strain>
    </source>
</reference>
<dbReference type="EC" id="2.2.1.2" evidence="1"/>
<dbReference type="EMBL" id="CP000607">
    <property type="protein sequence ID" value="ABP37738.1"/>
    <property type="molecule type" value="Genomic_DNA"/>
</dbReference>
<dbReference type="SMR" id="A4SGX9"/>
<dbReference type="STRING" id="290318.Cvib_1728"/>
<dbReference type="KEGG" id="pvi:Cvib_1728"/>
<dbReference type="eggNOG" id="COG0176">
    <property type="taxonomic scope" value="Bacteria"/>
</dbReference>
<dbReference type="HOGENOM" id="CLU_079764_0_0_10"/>
<dbReference type="OrthoDB" id="9807051at2"/>
<dbReference type="UniPathway" id="UPA00115">
    <property type="reaction ID" value="UER00414"/>
</dbReference>
<dbReference type="GO" id="GO:0005737">
    <property type="term" value="C:cytoplasm"/>
    <property type="evidence" value="ECO:0007669"/>
    <property type="project" value="UniProtKB-SubCell"/>
</dbReference>
<dbReference type="GO" id="GO:0016832">
    <property type="term" value="F:aldehyde-lyase activity"/>
    <property type="evidence" value="ECO:0007669"/>
    <property type="project" value="InterPro"/>
</dbReference>
<dbReference type="GO" id="GO:0004801">
    <property type="term" value="F:transaldolase activity"/>
    <property type="evidence" value="ECO:0007669"/>
    <property type="project" value="UniProtKB-UniRule"/>
</dbReference>
<dbReference type="GO" id="GO:0005975">
    <property type="term" value="P:carbohydrate metabolic process"/>
    <property type="evidence" value="ECO:0007669"/>
    <property type="project" value="InterPro"/>
</dbReference>
<dbReference type="GO" id="GO:0006098">
    <property type="term" value="P:pentose-phosphate shunt"/>
    <property type="evidence" value="ECO:0007669"/>
    <property type="project" value="UniProtKB-UniRule"/>
</dbReference>
<dbReference type="CDD" id="cd00956">
    <property type="entry name" value="Transaldolase_FSA"/>
    <property type="match status" value="1"/>
</dbReference>
<dbReference type="FunFam" id="3.20.20.70:FF:000018">
    <property type="entry name" value="Probable transaldolase"/>
    <property type="match status" value="1"/>
</dbReference>
<dbReference type="Gene3D" id="3.20.20.70">
    <property type="entry name" value="Aldolase class I"/>
    <property type="match status" value="1"/>
</dbReference>
<dbReference type="HAMAP" id="MF_00494">
    <property type="entry name" value="Transaldolase_3b"/>
    <property type="match status" value="1"/>
</dbReference>
<dbReference type="InterPro" id="IPR013785">
    <property type="entry name" value="Aldolase_TIM"/>
</dbReference>
<dbReference type="InterPro" id="IPR001585">
    <property type="entry name" value="TAL/FSA"/>
</dbReference>
<dbReference type="InterPro" id="IPR022999">
    <property type="entry name" value="Transaldolase_3B"/>
</dbReference>
<dbReference type="InterPro" id="IPR004731">
    <property type="entry name" value="Transaldolase_3B/F6P_aldolase"/>
</dbReference>
<dbReference type="InterPro" id="IPR018225">
    <property type="entry name" value="Transaldolase_AS"/>
</dbReference>
<dbReference type="InterPro" id="IPR033919">
    <property type="entry name" value="TSA/FSA_arc/bac"/>
</dbReference>
<dbReference type="NCBIfam" id="TIGR00875">
    <property type="entry name" value="fsa_talC_mipB"/>
    <property type="match status" value="1"/>
</dbReference>
<dbReference type="PANTHER" id="PTHR10683:SF40">
    <property type="entry name" value="FRUCTOSE-6-PHOSPHATE ALDOLASE 1-RELATED"/>
    <property type="match status" value="1"/>
</dbReference>
<dbReference type="PANTHER" id="PTHR10683">
    <property type="entry name" value="TRANSALDOLASE"/>
    <property type="match status" value="1"/>
</dbReference>
<dbReference type="Pfam" id="PF00923">
    <property type="entry name" value="TAL_FSA"/>
    <property type="match status" value="1"/>
</dbReference>
<dbReference type="SUPFAM" id="SSF51569">
    <property type="entry name" value="Aldolase"/>
    <property type="match status" value="1"/>
</dbReference>
<dbReference type="PROSITE" id="PS01054">
    <property type="entry name" value="TRANSALDOLASE_1"/>
    <property type="match status" value="1"/>
</dbReference>
<organism>
    <name type="scientific">Chlorobium phaeovibrioides (strain DSM 265 / 1930)</name>
    <name type="common">Prosthecochloris vibrioformis (strain DSM 265)</name>
    <dbReference type="NCBI Taxonomy" id="290318"/>
    <lineage>
        <taxon>Bacteria</taxon>
        <taxon>Pseudomonadati</taxon>
        <taxon>Chlorobiota</taxon>
        <taxon>Chlorobiia</taxon>
        <taxon>Chlorobiales</taxon>
        <taxon>Chlorobiaceae</taxon>
        <taxon>Chlorobium/Pelodictyon group</taxon>
        <taxon>Chlorobium</taxon>
    </lineage>
</organism>
<proteinExistence type="inferred from homology"/>
<sequence>MKFFIDTADLDEIRSAAELGMLDGVTTNPSLIAKIVKDPSNFTRTDFFDHIAAICDLVDGPVSAEVTSLDTASMIKEGEALAAIHDNVVVKCPLTIDGLKAIRHLSEAGIATNATLVFSPSQAILAAKAGASFVSPFVGRLDDISTDGMALVEDIVDIYDNYGYMAEVIVASVRHPQHVVEAARIGADIATIPFSVISRLAVHPLTESGLKKFMEDASVIKP</sequence>
<gene>
    <name evidence="1" type="primary">tal</name>
    <name type="ordered locus">Cvib_1728</name>
</gene>